<proteinExistence type="evidence at transcript level"/>
<protein>
    <recommendedName>
        <fullName evidence="7">YTH domain-containing protein ECT4</fullName>
    </recommendedName>
    <alternativeName>
        <fullName evidence="6">Protein EVOLUTIONARILY CONSERVED C-TERMINAL REGION 4</fullName>
    </alternativeName>
</protein>
<feature type="chain" id="PRO_0000445526" description="YTH domain-containing protein ECT4">
    <location>
        <begin position="1"/>
        <end position="605"/>
    </location>
</feature>
<feature type="domain" description="YTH" evidence="3">
    <location>
        <begin position="414"/>
        <end position="551"/>
    </location>
</feature>
<feature type="region of interest" description="Disordered" evidence="4">
    <location>
        <begin position="249"/>
        <end position="274"/>
    </location>
</feature>
<feature type="region of interest" description="Disordered" evidence="4">
    <location>
        <begin position="357"/>
        <end position="384"/>
    </location>
</feature>
<feature type="region of interest" description="Disordered" evidence="4">
    <location>
        <begin position="580"/>
        <end position="605"/>
    </location>
</feature>
<feature type="compositionally biased region" description="Polar residues" evidence="4">
    <location>
        <begin position="256"/>
        <end position="274"/>
    </location>
</feature>
<feature type="compositionally biased region" description="Basic and acidic residues" evidence="4">
    <location>
        <begin position="368"/>
        <end position="383"/>
    </location>
</feature>
<feature type="binding site" evidence="2">
    <location>
        <begin position="420"/>
        <end position="422"/>
    </location>
    <ligand>
        <name>RNA</name>
        <dbReference type="ChEBI" id="CHEBI:33697"/>
    </ligand>
    <ligandPart>
        <name>N(6)-methyladenosine 5'-phosphate residue</name>
        <dbReference type="ChEBI" id="CHEBI:74449"/>
    </ligandPart>
</feature>
<feature type="binding site" evidence="2">
    <location>
        <position position="426"/>
    </location>
    <ligand>
        <name>RNA</name>
        <dbReference type="ChEBI" id="CHEBI:33697"/>
    </ligand>
    <ligandPart>
        <name>N(6)-methyladenosine 5'-phosphate residue</name>
        <dbReference type="ChEBI" id="CHEBI:74449"/>
    </ligandPart>
</feature>
<feature type="binding site" evidence="2">
    <location>
        <begin position="436"/>
        <end position="437"/>
    </location>
    <ligand>
        <name>RNA</name>
        <dbReference type="ChEBI" id="CHEBI:33697"/>
    </ligand>
    <ligandPart>
        <name>N(6)-methyladenosine 5'-phosphate residue</name>
        <dbReference type="ChEBI" id="CHEBI:74449"/>
    </ligandPart>
</feature>
<feature type="binding site" evidence="2">
    <location>
        <position position="469"/>
    </location>
    <ligand>
        <name>RNA</name>
        <dbReference type="ChEBI" id="CHEBI:33697"/>
    </ligand>
    <ligandPart>
        <name>N(6)-methyladenosine 5'-phosphate residue</name>
        <dbReference type="ChEBI" id="CHEBI:74449"/>
    </ligandPart>
</feature>
<feature type="binding site" evidence="2">
    <location>
        <position position="493"/>
    </location>
    <ligand>
        <name>RNA</name>
        <dbReference type="ChEBI" id="CHEBI:33697"/>
    </ligand>
    <ligandPart>
        <name>N(6)-methyladenosine 5'-phosphate residue</name>
        <dbReference type="ChEBI" id="CHEBI:74449"/>
    </ligandPart>
</feature>
<feature type="binding site" evidence="2">
    <location>
        <position position="498"/>
    </location>
    <ligand>
        <name>RNA</name>
        <dbReference type="ChEBI" id="CHEBI:33697"/>
    </ligand>
    <ligandPart>
        <name>N(6)-methyladenosine 5'-phosphate residue</name>
        <dbReference type="ChEBI" id="CHEBI:74449"/>
    </ligandPart>
</feature>
<feature type="binding site" evidence="1">
    <location>
        <position position="506"/>
    </location>
    <ligand>
        <name>RNA</name>
        <dbReference type="ChEBI" id="CHEBI:33697"/>
    </ligand>
    <ligandPart>
        <name>N(6)-methyladenosine 5'-phosphate residue</name>
        <dbReference type="ChEBI" id="CHEBI:74449"/>
    </ligandPart>
</feature>
<feature type="splice variant" id="VSP_059898" description="In isoform 2.">
    <location>
        <begin position="1"/>
        <end position="43"/>
    </location>
</feature>
<feature type="splice variant" id="VSP_059899" description="In isoform 2.">
    <location>
        <begin position="103"/>
        <end position="115"/>
    </location>
</feature>
<keyword id="KW-0025">Alternative splicing</keyword>
<keyword id="KW-0963">Cytoplasm</keyword>
<keyword id="KW-1185">Reference proteome</keyword>
<keyword id="KW-0694">RNA-binding</keyword>
<evidence type="ECO:0000250" key="1">
    <source>
        <dbReference type="UniProtKB" id="Q9LJE5"/>
    </source>
</evidence>
<evidence type="ECO:0000250" key="2">
    <source>
        <dbReference type="UniProtKB" id="Q9Y5A9"/>
    </source>
</evidence>
<evidence type="ECO:0000255" key="3">
    <source>
        <dbReference type="PROSITE-ProRule" id="PRU00225"/>
    </source>
</evidence>
<evidence type="ECO:0000256" key="4">
    <source>
        <dbReference type="SAM" id="MobiDB-lite"/>
    </source>
</evidence>
<evidence type="ECO:0000269" key="5">
    <source>
    </source>
</evidence>
<evidence type="ECO:0000303" key="6">
    <source>
    </source>
</evidence>
<evidence type="ECO:0000305" key="7"/>
<evidence type="ECO:0000305" key="8">
    <source>
    </source>
</evidence>
<evidence type="ECO:0000312" key="9">
    <source>
        <dbReference type="EMBL" id="AAD10646.1"/>
    </source>
</evidence>
<evidence type="ECO:0000312" key="10">
    <source>
        <dbReference type="EMBL" id="ANM59432.1"/>
    </source>
</evidence>
<organism>
    <name type="scientific">Arabidopsis thaliana</name>
    <name type="common">Mouse-ear cress</name>
    <dbReference type="NCBI Taxonomy" id="3702"/>
    <lineage>
        <taxon>Eukaryota</taxon>
        <taxon>Viridiplantae</taxon>
        <taxon>Streptophyta</taxon>
        <taxon>Embryophyta</taxon>
        <taxon>Tracheophyta</taxon>
        <taxon>Spermatophyta</taxon>
        <taxon>Magnoliopsida</taxon>
        <taxon>eudicotyledons</taxon>
        <taxon>Gunneridae</taxon>
        <taxon>Pentapetalae</taxon>
        <taxon>rosids</taxon>
        <taxon>malvids</taxon>
        <taxon>Brassicales</taxon>
        <taxon>Brassicaceae</taxon>
        <taxon>Camelineae</taxon>
        <taxon>Arabidopsis</taxon>
    </lineage>
</organism>
<dbReference type="EMBL" id="AC005223">
    <property type="protein sequence ID" value="AAD10646.1"/>
    <property type="status" value="ALT_SEQ"/>
    <property type="molecule type" value="Genomic_DNA"/>
</dbReference>
<dbReference type="EMBL" id="CP002684">
    <property type="protein sequence ID" value="AEE33253.1"/>
    <property type="molecule type" value="Genomic_DNA"/>
</dbReference>
<dbReference type="EMBL" id="CP002684">
    <property type="protein sequence ID" value="ANM59432.1"/>
    <property type="molecule type" value="Genomic_DNA"/>
</dbReference>
<dbReference type="EMBL" id="AY050425">
    <property type="protein sequence ID" value="AAK91441.1"/>
    <property type="molecule type" value="mRNA"/>
</dbReference>
<dbReference type="EMBL" id="BT002240">
    <property type="protein sequence ID" value="AAN72251.1"/>
    <property type="molecule type" value="mRNA"/>
</dbReference>
<dbReference type="PIR" id="C96597">
    <property type="entry name" value="C96597"/>
</dbReference>
<dbReference type="RefSeq" id="NP_001321789.1">
    <molecule id="A0A1P8AS03-1"/>
    <property type="nucleotide sequence ID" value="NM_001333714.1"/>
</dbReference>
<dbReference type="RefSeq" id="NP_564692.1">
    <molecule id="A0A1P8AS03-2"/>
    <property type="nucleotide sequence ID" value="NM_104425.1"/>
</dbReference>
<dbReference type="SMR" id="A0A1P8AS03"/>
<dbReference type="FunCoup" id="A0A1P8AS03">
    <property type="interactions" value="1910"/>
</dbReference>
<dbReference type="STRING" id="3702.A0A1P8AS03"/>
<dbReference type="GlyGen" id="A0A1P8AS03">
    <property type="glycosylation" value="1 site, 1 O-linked glycan (1 site)"/>
</dbReference>
<dbReference type="PaxDb" id="3702-AT1G55500.2"/>
<dbReference type="ProteomicsDB" id="247059">
    <molecule id="A0A1P8AS03-1"/>
</dbReference>
<dbReference type="EnsemblPlants" id="AT1G55500.1">
    <molecule id="A0A1P8AS03-2"/>
    <property type="protein sequence ID" value="AT1G55500.1"/>
    <property type="gene ID" value="AT1G55500"/>
</dbReference>
<dbReference type="EnsemblPlants" id="AT1G55500.5">
    <molecule id="A0A1P8AS03-1"/>
    <property type="protein sequence ID" value="AT1G55500.5"/>
    <property type="gene ID" value="AT1G55500"/>
</dbReference>
<dbReference type="GeneID" id="841997"/>
<dbReference type="Gramene" id="AT1G55500.1">
    <molecule id="A0A1P8AS03-2"/>
    <property type="protein sequence ID" value="AT1G55500.1"/>
    <property type="gene ID" value="AT1G55500"/>
</dbReference>
<dbReference type="Gramene" id="AT1G55500.5">
    <molecule id="A0A1P8AS03-1"/>
    <property type="protein sequence ID" value="AT1G55500.5"/>
    <property type="gene ID" value="AT1G55500"/>
</dbReference>
<dbReference type="KEGG" id="ath:AT1G55500"/>
<dbReference type="Araport" id="AT1G55500"/>
<dbReference type="TAIR" id="AT1G55500">
    <property type="gene designation" value="ECT4"/>
</dbReference>
<dbReference type="HOGENOM" id="CLU_017795_5_1_1"/>
<dbReference type="InParanoid" id="A0A1P8AS03"/>
<dbReference type="PRO" id="PR:A0A1P8AS03"/>
<dbReference type="Proteomes" id="UP000006548">
    <property type="component" value="Chromosome 1"/>
</dbReference>
<dbReference type="ExpressionAtlas" id="A0A1P8AS03">
    <property type="expression patterns" value="baseline and differential"/>
</dbReference>
<dbReference type="GO" id="GO:0005737">
    <property type="term" value="C:cytoplasm"/>
    <property type="evidence" value="ECO:0007669"/>
    <property type="project" value="UniProtKB-SubCell"/>
</dbReference>
<dbReference type="GO" id="GO:0003723">
    <property type="term" value="F:RNA binding"/>
    <property type="evidence" value="ECO:0007669"/>
    <property type="project" value="UniProtKB-KW"/>
</dbReference>
<dbReference type="CDD" id="cd21134">
    <property type="entry name" value="YTH"/>
    <property type="match status" value="1"/>
</dbReference>
<dbReference type="FunFam" id="3.10.590.10:FF:000001">
    <property type="entry name" value="YTH domain family 1, isoform CRA_a"/>
    <property type="match status" value="1"/>
</dbReference>
<dbReference type="Gene3D" id="3.10.590.10">
    <property type="entry name" value="ph1033 like domains"/>
    <property type="match status" value="1"/>
</dbReference>
<dbReference type="InterPro" id="IPR007275">
    <property type="entry name" value="YTH_domain"/>
</dbReference>
<dbReference type="InterPro" id="IPR045168">
    <property type="entry name" value="YTH_prot"/>
</dbReference>
<dbReference type="PANTHER" id="PTHR12357:SF99">
    <property type="entry name" value="YTH DOMAIN-CONTAINING PROTEIN ECT2-RELATED"/>
    <property type="match status" value="1"/>
</dbReference>
<dbReference type="PANTHER" id="PTHR12357">
    <property type="entry name" value="YTH YT521-B HOMOLOGY DOMAIN-CONTAINING"/>
    <property type="match status" value="1"/>
</dbReference>
<dbReference type="Pfam" id="PF04146">
    <property type="entry name" value="YTH"/>
    <property type="match status" value="1"/>
</dbReference>
<dbReference type="PROSITE" id="PS50882">
    <property type="entry name" value="YTH"/>
    <property type="match status" value="1"/>
</dbReference>
<accession>A0A1P8AS03</accession>
<accession>Q94A30</accession>
<accession>Q9ZVU7</accession>
<reference key="1">
    <citation type="journal article" date="2000" name="Nature">
        <title>Sequence and analysis of chromosome 1 of the plant Arabidopsis thaliana.</title>
        <authorList>
            <person name="Theologis A."/>
            <person name="Ecker J.R."/>
            <person name="Palm C.J."/>
            <person name="Federspiel N.A."/>
            <person name="Kaul S."/>
            <person name="White O."/>
            <person name="Alonso J."/>
            <person name="Altafi H."/>
            <person name="Araujo R."/>
            <person name="Bowman C.L."/>
            <person name="Brooks S.Y."/>
            <person name="Buehler E."/>
            <person name="Chan A."/>
            <person name="Chao Q."/>
            <person name="Chen H."/>
            <person name="Cheuk R.F."/>
            <person name="Chin C.W."/>
            <person name="Chung M.K."/>
            <person name="Conn L."/>
            <person name="Conway A.B."/>
            <person name="Conway A.R."/>
            <person name="Creasy T.H."/>
            <person name="Dewar K."/>
            <person name="Dunn P."/>
            <person name="Etgu P."/>
            <person name="Feldblyum T.V."/>
            <person name="Feng J.-D."/>
            <person name="Fong B."/>
            <person name="Fujii C.Y."/>
            <person name="Gill J.E."/>
            <person name="Goldsmith A.D."/>
            <person name="Haas B."/>
            <person name="Hansen N.F."/>
            <person name="Hughes B."/>
            <person name="Huizar L."/>
            <person name="Hunter J.L."/>
            <person name="Jenkins J."/>
            <person name="Johnson-Hopson C."/>
            <person name="Khan S."/>
            <person name="Khaykin E."/>
            <person name="Kim C.J."/>
            <person name="Koo H.L."/>
            <person name="Kremenetskaia I."/>
            <person name="Kurtz D.B."/>
            <person name="Kwan A."/>
            <person name="Lam B."/>
            <person name="Langin-Hooper S."/>
            <person name="Lee A."/>
            <person name="Lee J.M."/>
            <person name="Lenz C.A."/>
            <person name="Li J.H."/>
            <person name="Li Y.-P."/>
            <person name="Lin X."/>
            <person name="Liu S.X."/>
            <person name="Liu Z.A."/>
            <person name="Luros J.S."/>
            <person name="Maiti R."/>
            <person name="Marziali A."/>
            <person name="Militscher J."/>
            <person name="Miranda M."/>
            <person name="Nguyen M."/>
            <person name="Nierman W.C."/>
            <person name="Osborne B.I."/>
            <person name="Pai G."/>
            <person name="Peterson J."/>
            <person name="Pham P.K."/>
            <person name="Rizzo M."/>
            <person name="Rooney T."/>
            <person name="Rowley D."/>
            <person name="Sakano H."/>
            <person name="Salzberg S.L."/>
            <person name="Schwartz J.R."/>
            <person name="Shinn P."/>
            <person name="Southwick A.M."/>
            <person name="Sun H."/>
            <person name="Tallon L.J."/>
            <person name="Tambunga G."/>
            <person name="Toriumi M.J."/>
            <person name="Town C.D."/>
            <person name="Utterback T."/>
            <person name="Van Aken S."/>
            <person name="Vaysberg M."/>
            <person name="Vysotskaia V.S."/>
            <person name="Walker M."/>
            <person name="Wu D."/>
            <person name="Yu G."/>
            <person name="Fraser C.M."/>
            <person name="Venter J.C."/>
            <person name="Davis R.W."/>
        </authorList>
    </citation>
    <scope>NUCLEOTIDE SEQUENCE [LARGE SCALE GENOMIC DNA]</scope>
    <source>
        <strain>cv. Columbia</strain>
    </source>
</reference>
<reference key="2">
    <citation type="journal article" date="2017" name="Plant J.">
        <title>Araport11: a complete reannotation of the Arabidopsis thaliana reference genome.</title>
        <authorList>
            <person name="Cheng C.Y."/>
            <person name="Krishnakumar V."/>
            <person name="Chan A.P."/>
            <person name="Thibaud-Nissen F."/>
            <person name="Schobel S."/>
            <person name="Town C.D."/>
        </authorList>
    </citation>
    <scope>GENOME REANNOTATION</scope>
    <source>
        <strain>cv. Columbia</strain>
    </source>
</reference>
<reference key="3">
    <citation type="journal article" date="2003" name="Science">
        <title>Empirical analysis of transcriptional activity in the Arabidopsis genome.</title>
        <authorList>
            <person name="Yamada K."/>
            <person name="Lim J."/>
            <person name="Dale J.M."/>
            <person name="Chen H."/>
            <person name="Shinn P."/>
            <person name="Palm C.J."/>
            <person name="Southwick A.M."/>
            <person name="Wu H.C."/>
            <person name="Kim C.J."/>
            <person name="Nguyen M."/>
            <person name="Pham P.K."/>
            <person name="Cheuk R.F."/>
            <person name="Karlin-Newmann G."/>
            <person name="Liu S.X."/>
            <person name="Lam B."/>
            <person name="Sakano H."/>
            <person name="Wu T."/>
            <person name="Yu G."/>
            <person name="Miranda M."/>
            <person name="Quach H.L."/>
            <person name="Tripp M."/>
            <person name="Chang C.H."/>
            <person name="Lee J.M."/>
            <person name="Toriumi M.J."/>
            <person name="Chan M.M."/>
            <person name="Tang C.C."/>
            <person name="Onodera C.S."/>
            <person name="Deng J.M."/>
            <person name="Akiyama K."/>
            <person name="Ansari Y."/>
            <person name="Arakawa T."/>
            <person name="Banh J."/>
            <person name="Banno F."/>
            <person name="Bowser L."/>
            <person name="Brooks S.Y."/>
            <person name="Carninci P."/>
            <person name="Chao Q."/>
            <person name="Choy N."/>
            <person name="Enju A."/>
            <person name="Goldsmith A.D."/>
            <person name="Gurjal M."/>
            <person name="Hansen N.F."/>
            <person name="Hayashizaki Y."/>
            <person name="Johnson-Hopson C."/>
            <person name="Hsuan V.W."/>
            <person name="Iida K."/>
            <person name="Karnes M."/>
            <person name="Khan S."/>
            <person name="Koesema E."/>
            <person name="Ishida J."/>
            <person name="Jiang P.X."/>
            <person name="Jones T."/>
            <person name="Kawai J."/>
            <person name="Kamiya A."/>
            <person name="Meyers C."/>
            <person name="Nakajima M."/>
            <person name="Narusaka M."/>
            <person name="Seki M."/>
            <person name="Sakurai T."/>
            <person name="Satou M."/>
            <person name="Tamse R."/>
            <person name="Vaysberg M."/>
            <person name="Wallender E.K."/>
            <person name="Wong C."/>
            <person name="Yamamura Y."/>
            <person name="Yuan S."/>
            <person name="Shinozaki K."/>
            <person name="Davis R.W."/>
            <person name="Theologis A."/>
            <person name="Ecker J.R."/>
        </authorList>
    </citation>
    <scope>NUCLEOTIDE SEQUENCE [LARGE SCALE MRNA] (ISOFORM 2)</scope>
    <source>
        <strain>cv. Columbia</strain>
    </source>
</reference>
<reference key="4">
    <citation type="journal article" date="2018" name="Plant Cell">
        <title>An m6A-YTH module controls developmental timing and morphogenesis in Arabidopsis.</title>
        <authorList>
            <person name="Arribas-Hernandez L."/>
            <person name="Bressendorff S."/>
            <person name="Hansen M.H."/>
            <person name="Poulsen C."/>
            <person name="Erdmann S."/>
            <person name="Brodersen P."/>
        </authorList>
    </citation>
    <scope>FUNCTION</scope>
    <scope>SUBCELLULAR LOCATION</scope>
    <scope>TISSUE SPECIFICITY</scope>
    <scope>DISRUPTION PHENOTYPE</scope>
</reference>
<sequence length="605" mass="66591">MSTVAPPADQAADVLKKLSLDSKSRTLEIPEPTKKTGVYQYGAMDSNGQVPSFDRSLSPMLPSDALDPSVFYVPNVYQQPYYYGYGSDYTGYTNSESVDMTSGAYGENASLVYPQGYGYAAFPYSPATSPAPQLGGDGQLYGAQQYQYPFPLTASSGPFASSVPASTQSKLSTNKAANSASAGIPKGMNGSAPVKPLNQSALYGNSALGGGLAAGYQDPRYSYDGFYTPVSWHDGSNFSDVQRSVSGSGVASSYSKANNNVPATRNQNSSSNSHYTSMYQPASMTGYAAQGYYDRVSPNKSYGQYGSTVRSGMGYGSSGYGSRTNERGWLNTDNKYRSRGRGNSYFYGNENIDGLNELNRGPRAKGTKATEEVSSEEVKKQTFDESNTEETVTCVLPDREECNRDDFPVEYKDAKFFIIKSYSEDDVHKSIKYNVWASTPNGNKKLDAAYQEAQQKSSGCPVFLFFSVNASGQFIGLAEMKGPVDFNKNIEYWQQDKWTGSFPLKWHILKDVPNSLLKHITLEYNENKPVTNSRDTQEVKLEQGLKVVKIFKEHNSKTCILDDFSFYEARQKTILEKKAKQQQSQKQVWEGKTNDEKPGTVDSTM</sequence>
<name>ECT4_ARATH</name>
<comment type="function">
    <text evidence="5 8">Specifically recognizes and binds N6-methyladenosine (m6A)-containing RNAs, and regulates mRNA stability (Probable). M6A is a modification present at internal sites of mRNAs and some non-coding RNAs and plays a role in mRNA stability and processing (Probable). Required for the correct timing of leaf formation and normal leaf morphology (PubMed:29643069).</text>
</comment>
<comment type="subcellular location">
    <subcellularLocation>
        <location evidence="5">Cytoplasm</location>
    </subcellularLocation>
    <text evidence="5">Localizes to cytoplasmic foci upon drought stress.</text>
</comment>
<comment type="alternative products">
    <event type="alternative splicing"/>
    <isoform>
        <id>A0A1P8AS03-1</id>
        <name>1</name>
        <sequence type="displayed"/>
    </isoform>
    <isoform>
        <id>A0A1P8AS03-2</id>
        <name>2</name>
        <sequence type="described" ref="VSP_059898 VSP_059899"/>
    </isoform>
</comment>
<comment type="tissue specificity">
    <text evidence="5">Expressed in the shoot apex, at the sites of leaf formation, and in emerging leaves.</text>
</comment>
<comment type="disruption phenotype">
    <text evidence="5">No visible phenotype under normal growth conditions, but the delayed leaf emergence and leaf morphology defect of the double mutant ect2 and ect3 is enhanced in the triple mutant ect2, ect3 and ect4.</text>
</comment>
<comment type="sequence caution" evidence="7">
    <conflict type="erroneous gene model prediction">
        <sequence resource="EMBL-CDS" id="AAD10646"/>
    </conflict>
</comment>
<gene>
    <name evidence="6" type="primary">ECT4</name>
    <name evidence="10" type="ordered locus">At1g55500</name>
    <name evidence="9" type="ORF">T5A14.10</name>
</gene>